<evidence type="ECO:0000255" key="1"/>
<evidence type="ECO:0000256" key="2">
    <source>
        <dbReference type="SAM" id="MobiDB-lite"/>
    </source>
</evidence>
<evidence type="ECO:0000269" key="3">
    <source>
    </source>
</evidence>
<evidence type="ECO:0000303" key="4">
    <source>
    </source>
</evidence>
<evidence type="ECO:0000305" key="5"/>
<evidence type="ECO:0000312" key="6">
    <source>
        <dbReference type="Araport" id="AT2G32200"/>
    </source>
</evidence>
<evidence type="ECO:0000312" key="7">
    <source>
        <dbReference type="EMBL" id="AAD15385.1"/>
    </source>
</evidence>
<sequence>MSQYSQNQYAGAYPTPPVSTGPYVAPPPLGYPTNDTTHATVAPVETKSKGEAADGFLKGCLATMLACCVLDACIF</sequence>
<accession>Q1PEX8</accession>
<accession>A0MER3</accession>
<accession>Q9SKY0</accession>
<reference key="1">
    <citation type="journal article" date="1999" name="Nature">
        <title>Sequence and analysis of chromosome 2 of the plant Arabidopsis thaliana.</title>
        <authorList>
            <person name="Lin X."/>
            <person name="Kaul S."/>
            <person name="Rounsley S.D."/>
            <person name="Shea T.P."/>
            <person name="Benito M.-I."/>
            <person name="Town C.D."/>
            <person name="Fujii C.Y."/>
            <person name="Mason T.M."/>
            <person name="Bowman C.L."/>
            <person name="Barnstead M.E."/>
            <person name="Feldblyum T.V."/>
            <person name="Buell C.R."/>
            <person name="Ketchum K.A."/>
            <person name="Lee J.J."/>
            <person name="Ronning C.M."/>
            <person name="Koo H.L."/>
            <person name="Moffat K.S."/>
            <person name="Cronin L.A."/>
            <person name="Shen M."/>
            <person name="Pai G."/>
            <person name="Van Aken S."/>
            <person name="Umayam L."/>
            <person name="Tallon L.J."/>
            <person name="Gill J.E."/>
            <person name="Adams M.D."/>
            <person name="Carrera A.J."/>
            <person name="Creasy T.H."/>
            <person name="Goodman H.M."/>
            <person name="Somerville C.R."/>
            <person name="Copenhaver G.P."/>
            <person name="Preuss D."/>
            <person name="Nierman W.C."/>
            <person name="White O."/>
            <person name="Eisen J.A."/>
            <person name="Salzberg S.L."/>
            <person name="Fraser C.M."/>
            <person name="Venter J.C."/>
        </authorList>
    </citation>
    <scope>NUCLEOTIDE SEQUENCE [LARGE SCALE GENOMIC DNA]</scope>
    <source>
        <strain>cv. Columbia</strain>
    </source>
</reference>
<reference key="2">
    <citation type="journal article" date="2017" name="Plant J.">
        <title>Araport11: a complete reannotation of the Arabidopsis thaliana reference genome.</title>
        <authorList>
            <person name="Cheng C.Y."/>
            <person name="Krishnakumar V."/>
            <person name="Chan A.P."/>
            <person name="Thibaud-Nissen F."/>
            <person name="Schobel S."/>
            <person name="Town C.D."/>
        </authorList>
    </citation>
    <scope>GENOME REANNOTATION</scope>
    <source>
        <strain>cv. Columbia</strain>
    </source>
</reference>
<reference key="3">
    <citation type="journal article" date="2006" name="Plant Biotechnol. J.">
        <title>Simultaneous high-throughput recombinational cloning of open reading frames in closed and open configurations.</title>
        <authorList>
            <person name="Underwood B.A."/>
            <person name="Vanderhaeghen R."/>
            <person name="Whitford R."/>
            <person name="Town C.D."/>
            <person name="Hilson P."/>
        </authorList>
    </citation>
    <scope>NUCLEOTIDE SEQUENCE [LARGE SCALE MRNA]</scope>
    <source>
        <strain>cv. Columbia</strain>
    </source>
</reference>
<reference key="4">
    <citation type="journal article" date="2018" name="Plant Cell Physiol.">
        <title>CYSTM, a novel non-secreted cysteine-rich peptide family, involved in environmental stresses in Arabidopsis thaliana.</title>
        <authorList>
            <person name="Xu Y."/>
            <person name="Yu Z."/>
            <person name="Zhang D."/>
            <person name="Huang J."/>
            <person name="Wu C."/>
            <person name="Yang G."/>
            <person name="Yan K."/>
            <person name="Zhang S."/>
            <person name="Zheng C."/>
        </authorList>
    </citation>
    <scope>FUNCTION</scope>
    <scope>INTERACTION WITH CYSTM7 AND WIH1/CYSTM13</scope>
    <scope>TISSUE SPECIFICITY</scope>
    <scope>INDUCTION BY HEAT; COLD; DROUGHT; OXIDATION AND SALT</scope>
    <scope>SUBCELLULAR LOCATION</scope>
    <source>
        <strain>cv. Columbia</strain>
    </source>
</reference>
<proteinExistence type="evidence at protein level"/>
<dbReference type="EMBL" id="AC006223">
    <property type="protein sequence ID" value="AAD15385.1"/>
    <property type="status" value="ALT_SEQ"/>
    <property type="molecule type" value="Genomic_DNA"/>
</dbReference>
<dbReference type="EMBL" id="CP002685">
    <property type="protein sequence ID" value="AEC08649.1"/>
    <property type="molecule type" value="Genomic_DNA"/>
</dbReference>
<dbReference type="EMBL" id="DQ446589">
    <property type="protein sequence ID" value="ABE65881.1"/>
    <property type="molecule type" value="mRNA"/>
</dbReference>
<dbReference type="EMBL" id="DQ653035">
    <property type="protein sequence ID" value="ABK28521.1"/>
    <property type="status" value="ALT_SEQ"/>
    <property type="molecule type" value="mRNA"/>
</dbReference>
<dbReference type="PIR" id="B84730">
    <property type="entry name" value="B84730"/>
</dbReference>
<dbReference type="RefSeq" id="NP_180779.2">
    <property type="nucleotide sequence ID" value="NM_128779.4"/>
</dbReference>
<dbReference type="GlyGen" id="Q1PEX8">
    <property type="glycosylation" value="1 site"/>
</dbReference>
<dbReference type="PaxDb" id="3702-AT2G32200.1"/>
<dbReference type="EnsemblPlants" id="AT2G32200.1">
    <property type="protein sequence ID" value="AT2G32200.1"/>
    <property type="gene ID" value="AT2G32200"/>
</dbReference>
<dbReference type="GeneID" id="817779"/>
<dbReference type="Gramene" id="AT2G32200.1">
    <property type="protein sequence ID" value="AT2G32200.1"/>
    <property type="gene ID" value="AT2G32200"/>
</dbReference>
<dbReference type="KEGG" id="ath:AT2G32200"/>
<dbReference type="Araport" id="AT2G32200"/>
<dbReference type="TAIR" id="AT2G32200">
    <property type="gene designation" value="ATHCYSTM5"/>
</dbReference>
<dbReference type="HOGENOM" id="CLU_128451_2_2_1"/>
<dbReference type="InParanoid" id="Q1PEX8"/>
<dbReference type="OMA" id="NHTTHAT"/>
<dbReference type="OrthoDB" id="1027102at2759"/>
<dbReference type="PhylomeDB" id="Q1PEX8"/>
<dbReference type="PRO" id="PR:Q1PEX8"/>
<dbReference type="Proteomes" id="UP000006548">
    <property type="component" value="Chromosome 2"/>
</dbReference>
<dbReference type="ExpressionAtlas" id="Q1PEX8">
    <property type="expression patterns" value="baseline and differential"/>
</dbReference>
<dbReference type="GO" id="GO:0005737">
    <property type="term" value="C:cytoplasm"/>
    <property type="evidence" value="ECO:0000314"/>
    <property type="project" value="TAIR"/>
</dbReference>
<dbReference type="GO" id="GO:0005634">
    <property type="term" value="C:nucleus"/>
    <property type="evidence" value="ECO:0000314"/>
    <property type="project" value="UniProtKB"/>
</dbReference>
<dbReference type="GO" id="GO:0005886">
    <property type="term" value="C:plasma membrane"/>
    <property type="evidence" value="ECO:0000314"/>
    <property type="project" value="UniProtKB"/>
</dbReference>
<dbReference type="GO" id="GO:0071456">
    <property type="term" value="P:cellular response to hypoxia"/>
    <property type="evidence" value="ECO:0007007"/>
    <property type="project" value="TAIR"/>
</dbReference>
<dbReference type="InterPro" id="IPR028144">
    <property type="entry name" value="CYSTM_dom"/>
</dbReference>
<dbReference type="InterPro" id="IPR044850">
    <property type="entry name" value="WIH1-like"/>
</dbReference>
<dbReference type="PANTHER" id="PTHR31568:SF138">
    <property type="entry name" value="PROTEIN CYSTEINE-RICH TRANSMEMBRANE MODULE 4-RELATED"/>
    <property type="match status" value="1"/>
</dbReference>
<dbReference type="PANTHER" id="PTHR31568">
    <property type="entry name" value="RCG49325, ISOFORM CRA_A"/>
    <property type="match status" value="1"/>
</dbReference>
<dbReference type="Pfam" id="PF12734">
    <property type="entry name" value="CYSTM"/>
    <property type="match status" value="1"/>
</dbReference>
<comment type="function">
    <text evidence="4">Involved in resistance to abiotic stress.</text>
</comment>
<comment type="subunit">
    <text evidence="3">Heterodimers (PubMed:29272523). Interacts with CYSTM7 and WIH1/CYSTM13 (PubMed:29272523).</text>
</comment>
<comment type="subcellular location">
    <subcellularLocation>
        <location evidence="3">Cell membrane</location>
        <topology evidence="1">Single-pass membrane protein</topology>
    </subcellularLocation>
    <subcellularLocation>
        <location evidence="3">Nucleus</location>
    </subcellularLocation>
</comment>
<comment type="tissue specificity">
    <text evidence="3">Mostly expressed in roots, stems, rosette leaves and siliques and, to a lower extent, in flowers and cauline leaves.</text>
</comment>
<comment type="induction">
    <text evidence="3">Induced by heat in roots, but suppressed in shoots (PubMed:29272523). Accumulates in response to cold, drought, oxidation stress and salt (PubMed:29272523).</text>
</comment>
<comment type="similarity">
    <text evidence="5">Belongs to the CYSTM1 family.</text>
</comment>
<comment type="sequence caution" evidence="5">
    <conflict type="erroneous gene model prediction">
        <sequence resource="EMBL-CDS" id="AAD15385"/>
    </conflict>
</comment>
<comment type="sequence caution" evidence="5">
    <conflict type="erroneous termination">
        <sequence resource="EMBL-CDS" id="ABK28521"/>
    </conflict>
    <text>Extended C-terminus.</text>
</comment>
<name>CSTM5_ARATH</name>
<protein>
    <recommendedName>
        <fullName evidence="4">Protein CYSTEINE-RICH TRANSMEMBRANE MODULE 5</fullName>
        <shortName evidence="4">AthCYSTM5</shortName>
    </recommendedName>
</protein>
<keyword id="KW-1003">Cell membrane</keyword>
<keyword id="KW-0472">Membrane</keyword>
<keyword id="KW-0539">Nucleus</keyword>
<keyword id="KW-1185">Reference proteome</keyword>
<keyword id="KW-0812">Transmembrane</keyword>
<keyword id="KW-1133">Transmembrane helix</keyword>
<gene>
    <name evidence="4" type="primary">CYSTM5</name>
    <name evidence="6" type="ordered locus">At2g32200</name>
    <name evidence="7" type="ORF">F22D22.5</name>
</gene>
<organism>
    <name type="scientific">Arabidopsis thaliana</name>
    <name type="common">Mouse-ear cress</name>
    <dbReference type="NCBI Taxonomy" id="3702"/>
    <lineage>
        <taxon>Eukaryota</taxon>
        <taxon>Viridiplantae</taxon>
        <taxon>Streptophyta</taxon>
        <taxon>Embryophyta</taxon>
        <taxon>Tracheophyta</taxon>
        <taxon>Spermatophyta</taxon>
        <taxon>Magnoliopsida</taxon>
        <taxon>eudicotyledons</taxon>
        <taxon>Gunneridae</taxon>
        <taxon>Pentapetalae</taxon>
        <taxon>rosids</taxon>
        <taxon>malvids</taxon>
        <taxon>Brassicales</taxon>
        <taxon>Brassicaceae</taxon>
        <taxon>Camelineae</taxon>
        <taxon>Arabidopsis</taxon>
    </lineage>
</organism>
<feature type="chain" id="PRO_0000454802" description="Protein CYSTEINE-RICH TRANSMEMBRANE MODULE 5">
    <location>
        <begin position="1"/>
        <end position="75"/>
    </location>
</feature>
<feature type="transmembrane region" description="Helical" evidence="1">
    <location>
        <begin position="52"/>
        <end position="69"/>
    </location>
</feature>
<feature type="region of interest" description="Disordered" evidence="2">
    <location>
        <begin position="1"/>
        <end position="29"/>
    </location>
</feature>
<feature type="compositionally biased region" description="Pro residues" evidence="2">
    <location>
        <begin position="14"/>
        <end position="29"/>
    </location>
</feature>